<proteinExistence type="inferred from homology"/>
<organism>
    <name type="scientific">Drosophila pseudoobscura pseudoobscura</name>
    <name type="common">Fruit fly</name>
    <dbReference type="NCBI Taxonomy" id="46245"/>
    <lineage>
        <taxon>Eukaryota</taxon>
        <taxon>Metazoa</taxon>
        <taxon>Ecdysozoa</taxon>
        <taxon>Arthropoda</taxon>
        <taxon>Hexapoda</taxon>
        <taxon>Insecta</taxon>
        <taxon>Pterygota</taxon>
        <taxon>Neoptera</taxon>
        <taxon>Endopterygota</taxon>
        <taxon>Diptera</taxon>
        <taxon>Brachycera</taxon>
        <taxon>Muscomorpha</taxon>
        <taxon>Ephydroidea</taxon>
        <taxon>Drosophilidae</taxon>
        <taxon>Drosophila</taxon>
        <taxon>Sophophora</taxon>
    </lineage>
</organism>
<evidence type="ECO:0000250" key="1"/>
<evidence type="ECO:0000250" key="2">
    <source>
        <dbReference type="UniProtKB" id="Q28165"/>
    </source>
</evidence>
<evidence type="ECO:0000250" key="3">
    <source>
        <dbReference type="UniProtKB" id="Q7KNF2"/>
    </source>
</evidence>
<evidence type="ECO:0000255" key="4"/>
<evidence type="ECO:0000255" key="5">
    <source>
        <dbReference type="PROSITE-ProRule" id="PRU00176"/>
    </source>
</evidence>
<evidence type="ECO:0000256" key="6">
    <source>
        <dbReference type="SAM" id="MobiDB-lite"/>
    </source>
</evidence>
<evidence type="ECO:0000305" key="7"/>
<evidence type="ECO:0000312" key="8">
    <source>
        <dbReference type="EMBL" id="EAL25489.1"/>
    </source>
</evidence>
<dbReference type="EMBL" id="CM000071">
    <property type="protein sequence ID" value="EAL25489.1"/>
    <property type="status" value="ALT_SEQ"/>
    <property type="molecule type" value="Genomic_DNA"/>
</dbReference>
<dbReference type="SMR" id="Q28ZX3"/>
<dbReference type="FunCoup" id="Q28ZX3">
    <property type="interactions" value="2473"/>
</dbReference>
<dbReference type="STRING" id="46245.Q28ZX3"/>
<dbReference type="eggNOG" id="KOG4209">
    <property type="taxonomic scope" value="Eukaryota"/>
</dbReference>
<dbReference type="HOGENOM" id="CLU_012062_23_3_1"/>
<dbReference type="InParanoid" id="Q28ZX3"/>
<dbReference type="OMA" id="YRGRATY"/>
<dbReference type="PhylomeDB" id="Q28ZX3"/>
<dbReference type="ChiTaRS" id="Pabp2">
    <property type="organism name" value="fly"/>
</dbReference>
<dbReference type="Proteomes" id="UP000001819">
    <property type="component" value="Unplaced"/>
</dbReference>
<dbReference type="GO" id="GO:0005737">
    <property type="term" value="C:cytoplasm"/>
    <property type="evidence" value="ECO:0000250"/>
    <property type="project" value="UniProtKB"/>
</dbReference>
<dbReference type="GO" id="GO:0005634">
    <property type="term" value="C:nucleus"/>
    <property type="evidence" value="ECO:0000250"/>
    <property type="project" value="UniProtKB"/>
</dbReference>
<dbReference type="GO" id="GO:0008143">
    <property type="term" value="F:poly(A) binding"/>
    <property type="evidence" value="ECO:0000250"/>
    <property type="project" value="UniProtKB"/>
</dbReference>
<dbReference type="GO" id="GO:0003723">
    <property type="term" value="F:RNA binding"/>
    <property type="evidence" value="ECO:0000250"/>
    <property type="project" value="UniProtKB"/>
</dbReference>
<dbReference type="GO" id="GO:0031124">
    <property type="term" value="P:mRNA 3'-end processing"/>
    <property type="evidence" value="ECO:0000250"/>
    <property type="project" value="UniProtKB"/>
</dbReference>
<dbReference type="CDD" id="cd12550">
    <property type="entry name" value="RRM_II_PABPN1"/>
    <property type="match status" value="1"/>
</dbReference>
<dbReference type="FunFam" id="3.30.70.330:FF:000543">
    <property type="entry name" value="Pabp2, isoform B"/>
    <property type="match status" value="1"/>
</dbReference>
<dbReference type="Gene3D" id="3.30.70.330">
    <property type="match status" value="1"/>
</dbReference>
<dbReference type="InterPro" id="IPR012677">
    <property type="entry name" value="Nucleotide-bd_a/b_plait_sf"/>
</dbReference>
<dbReference type="InterPro" id="IPR035979">
    <property type="entry name" value="RBD_domain_sf"/>
</dbReference>
<dbReference type="InterPro" id="IPR000504">
    <property type="entry name" value="RRM_dom"/>
</dbReference>
<dbReference type="PANTHER" id="PTHR23236:SF12">
    <property type="entry name" value="EUKARYOTIC INITIATION FACTOR 4B-RELATED"/>
    <property type="match status" value="1"/>
</dbReference>
<dbReference type="PANTHER" id="PTHR23236">
    <property type="entry name" value="EUKARYOTIC TRANSLATION INITIATION FACTOR 4B/4H"/>
    <property type="match status" value="1"/>
</dbReference>
<dbReference type="Pfam" id="PF00076">
    <property type="entry name" value="RRM_1"/>
    <property type="match status" value="1"/>
</dbReference>
<dbReference type="SMART" id="SM00360">
    <property type="entry name" value="RRM"/>
    <property type="match status" value="1"/>
</dbReference>
<dbReference type="SUPFAM" id="SSF54928">
    <property type="entry name" value="RNA-binding domain, RBD"/>
    <property type="match status" value="1"/>
</dbReference>
<dbReference type="PROSITE" id="PS50102">
    <property type="entry name" value="RRM"/>
    <property type="match status" value="1"/>
</dbReference>
<name>PABP2_DROPS</name>
<accession>Q28ZX3</accession>
<comment type="function">
    <text evidence="1">Involved in the 3'-end formation of mRNA precursors (pre-mRNA) by the addition of a poly(A) tail of 200-250 nt to the upstream cleavage product. Stimulates poly(A) polymerase (PAPOLA) conferring processivity on the poly(A) tail elongation reaction and also controls the poly(A) tail length. Increases the affinity of poly(A) polymerase for RNA. Binds to poly(A) and to poly(G) with high affinity. May protect the poly(A) tail from degradation (By similarity).</text>
</comment>
<comment type="subcellular location">
    <subcellularLocation>
        <location evidence="1">Nucleus</location>
    </subcellularLocation>
    <subcellularLocation>
        <location evidence="1">Cytoplasm</location>
    </subcellularLocation>
    <text evidence="1">Shuttles between the nucleus and the cytoplasm but predominantly found in the nucleus.</text>
</comment>
<comment type="domain">
    <text evidence="2">The RRM domain is essential for specific adenine bases recognition in the poly(A) tail but not sufficient for poly(A) binding.</text>
</comment>
<comment type="sequence caution" evidence="7">
    <conflict type="erroneous gene model prediction">
        <sequence resource="EMBL-CDS" id="EAL25489"/>
    </conflict>
</comment>
<keyword id="KW-0175">Coiled coil</keyword>
<keyword id="KW-0963">Cytoplasm</keyword>
<keyword id="KW-0507">mRNA processing</keyword>
<keyword id="KW-0539">Nucleus</keyword>
<keyword id="KW-1185">Reference proteome</keyword>
<keyword id="KW-0694">RNA-binding</keyword>
<sequence>MADEDISLNEDQLLESMEETNGEQETEIVTETEEEGSMQIDPELEAIKARVKEMEEEAEKIKQMQSEVDKQMAGGSTTGLAAVPLSLEEKQEIDTRSVYVGNVDYGASAEELEAHFHGCGTINRVTILCNKADGHPKGFAYIEFGSKEFVETALAMNETLFRGRQIKVMSKRTNRPGLSTTNRFARGSFRGRGARASRACCHSTFRGARRAIRGYRGRANYYAPY</sequence>
<protein>
    <recommendedName>
        <fullName>Polyadenylate-binding protein 2</fullName>
        <shortName>PABP-2</shortName>
        <shortName>Poly(A)-binding protein 2</shortName>
    </recommendedName>
    <alternativeName>
        <fullName>Nuclear poly(A)-binding protein 1</fullName>
    </alternativeName>
    <alternativeName>
        <fullName>Poly(A)-binding protein II</fullName>
        <shortName>PABII</shortName>
    </alternativeName>
    <alternativeName>
        <fullName>Polyadenylate-binding nuclear protein 1</fullName>
    </alternativeName>
</protein>
<gene>
    <name evidence="3" type="primary">Pabp2</name>
    <name type="ORF">GA15278</name>
</gene>
<reference evidence="8" key="1">
    <citation type="journal article" date="2005" name="Genome Res.">
        <title>Comparative genome sequencing of Drosophila pseudoobscura: chromosomal, gene, and cis-element evolution.</title>
        <authorList>
            <person name="Richards S."/>
            <person name="Liu Y."/>
            <person name="Bettencourt B.R."/>
            <person name="Hradecky P."/>
            <person name="Letovsky S."/>
            <person name="Nielsen R."/>
            <person name="Thornton K."/>
            <person name="Hubisz M.J."/>
            <person name="Chen R."/>
            <person name="Meisel R.P."/>
            <person name="Couronne O."/>
            <person name="Hua S."/>
            <person name="Smith M.A."/>
            <person name="Zhang P."/>
            <person name="Liu J."/>
            <person name="Bussemaker H.J."/>
            <person name="van Batenburg M.F."/>
            <person name="Howells S.L."/>
            <person name="Scherer S.E."/>
            <person name="Sodergren E."/>
            <person name="Matthews B.B."/>
            <person name="Crosby M.A."/>
            <person name="Schroeder A.J."/>
            <person name="Ortiz-Barrientos D."/>
            <person name="Rives C.M."/>
            <person name="Metzker M.L."/>
            <person name="Muzny D.M."/>
            <person name="Scott G."/>
            <person name="Steffen D."/>
            <person name="Wheeler D.A."/>
            <person name="Worley K.C."/>
            <person name="Havlak P."/>
            <person name="Durbin K.J."/>
            <person name="Egan A."/>
            <person name="Gill R."/>
            <person name="Hume J."/>
            <person name="Morgan M.B."/>
            <person name="Miner G."/>
            <person name="Hamilton C."/>
            <person name="Huang Y."/>
            <person name="Waldron L."/>
            <person name="Verduzco D."/>
            <person name="Clerc-Blankenburg K.P."/>
            <person name="Dubchak I."/>
            <person name="Noor M.A.F."/>
            <person name="Anderson W."/>
            <person name="White K.P."/>
            <person name="Clark A.G."/>
            <person name="Schaeffer S.W."/>
            <person name="Gelbart W.M."/>
            <person name="Weinstock G.M."/>
            <person name="Gibbs R.A."/>
        </authorList>
    </citation>
    <scope>NUCLEOTIDE SEQUENCE [LARGE SCALE GENOMIC DNA]</scope>
    <source>
        <strain>MV2-25 / Tucson 14011-0121.94</strain>
    </source>
</reference>
<feature type="chain" id="PRO_0000244518" description="Polyadenylate-binding protein 2">
    <location>
        <begin position="1"/>
        <end position="225"/>
    </location>
</feature>
<feature type="domain" description="RRM" evidence="5">
    <location>
        <begin position="96"/>
        <end position="173"/>
    </location>
</feature>
<feature type="region of interest" description="Disordered" evidence="6">
    <location>
        <begin position="1"/>
        <end position="42"/>
    </location>
</feature>
<feature type="coiled-coil region" evidence="4">
    <location>
        <begin position="14"/>
        <end position="74"/>
    </location>
</feature>
<feature type="compositionally biased region" description="Acidic residues" evidence="6">
    <location>
        <begin position="1"/>
        <end position="36"/>
    </location>
</feature>